<proteinExistence type="evidence at protein level"/>
<evidence type="ECO:0000255" key="1"/>
<evidence type="ECO:0000255" key="2">
    <source>
        <dbReference type="PROSITE-ProRule" id="PRU00076"/>
    </source>
</evidence>
<evidence type="ECO:0000255" key="3">
    <source>
        <dbReference type="PROSITE-ProRule" id="PRU00635"/>
    </source>
</evidence>
<evidence type="ECO:0000256" key="4">
    <source>
        <dbReference type="SAM" id="MobiDB-lite"/>
    </source>
</evidence>
<evidence type="ECO:0000269" key="5">
    <source>
    </source>
</evidence>
<evidence type="ECO:0000303" key="6">
    <source>
    </source>
</evidence>
<evidence type="ECO:0000305" key="7"/>
<dbReference type="EMBL" id="L38969">
    <property type="protein sequence ID" value="AAC41762.1"/>
    <property type="molecule type" value="mRNA"/>
</dbReference>
<dbReference type="EMBL" id="AL713999">
    <property type="status" value="NOT_ANNOTATED_CDS"/>
    <property type="molecule type" value="Genomic_DNA"/>
</dbReference>
<dbReference type="EMBL" id="AF023268">
    <property type="protein sequence ID" value="AAC51818.1"/>
    <property type="molecule type" value="Genomic_DNA"/>
</dbReference>
<dbReference type="EMBL" id="AK298592">
    <property type="protein sequence ID" value="BAG60782.1"/>
    <property type="molecule type" value="mRNA"/>
</dbReference>
<dbReference type="EMBL" id="CH471121">
    <property type="protein sequence ID" value="EAW53110.1"/>
    <property type="molecule type" value="Genomic_DNA"/>
</dbReference>
<dbReference type="EMBL" id="BC018786">
    <property type="protein sequence ID" value="AAH18786.1"/>
    <property type="molecule type" value="mRNA"/>
</dbReference>
<dbReference type="CCDS" id="CCDS1099.1">
    <molecule id="P49746-1"/>
</dbReference>
<dbReference type="CCDS" id="CCDS58034.1">
    <molecule id="P49746-2"/>
</dbReference>
<dbReference type="PIR" id="A57121">
    <property type="entry name" value="A57121"/>
</dbReference>
<dbReference type="RefSeq" id="NP_001239536.1">
    <property type="nucleotide sequence ID" value="NM_001252607.1"/>
</dbReference>
<dbReference type="RefSeq" id="NP_001239537.1">
    <molecule id="P49746-2"/>
    <property type="nucleotide sequence ID" value="NM_001252608.2"/>
</dbReference>
<dbReference type="RefSeq" id="NP_009043.1">
    <molecule id="P49746-1"/>
    <property type="nucleotide sequence ID" value="NM_007112.5"/>
</dbReference>
<dbReference type="SMR" id="P49746"/>
<dbReference type="BioGRID" id="112917">
    <property type="interactions" value="92"/>
</dbReference>
<dbReference type="ComplexPortal" id="CPX-1789">
    <property type="entry name" value="Thrombospondin 3 complex"/>
</dbReference>
<dbReference type="CORUM" id="P49746"/>
<dbReference type="FunCoup" id="P49746">
    <property type="interactions" value="707"/>
</dbReference>
<dbReference type="IntAct" id="P49746">
    <property type="interactions" value="47"/>
</dbReference>
<dbReference type="MINT" id="P49746"/>
<dbReference type="STRING" id="9606.ENSP00000357362"/>
<dbReference type="GlyConnect" id="1806">
    <property type="glycosylation" value="18 N-Linked glycans (2 sites)"/>
</dbReference>
<dbReference type="GlyCosmos" id="P49746">
    <property type="glycosylation" value="4 sites, 18 glycans"/>
</dbReference>
<dbReference type="GlyGen" id="P49746">
    <property type="glycosylation" value="5 sites, 35 N-linked glycans (3 sites), 1 O-linked glycan (1 site)"/>
</dbReference>
<dbReference type="iPTMnet" id="P49746"/>
<dbReference type="PhosphoSitePlus" id="P49746"/>
<dbReference type="BioMuta" id="THBS3"/>
<dbReference type="DMDM" id="1717814"/>
<dbReference type="jPOST" id="P49746"/>
<dbReference type="MassIVE" id="P49746"/>
<dbReference type="PaxDb" id="9606-ENSP00000357362"/>
<dbReference type="PeptideAtlas" id="P49746"/>
<dbReference type="ProteomicsDB" id="4837"/>
<dbReference type="ProteomicsDB" id="56059">
    <molecule id="P49746-1"/>
</dbReference>
<dbReference type="Antibodypedia" id="34176">
    <property type="antibodies" value="201 antibodies from 29 providers"/>
</dbReference>
<dbReference type="DNASU" id="7059"/>
<dbReference type="Ensembl" id="ENST00000368378.7">
    <molecule id="P49746-1"/>
    <property type="protein sequence ID" value="ENSP00000357362.3"/>
    <property type="gene ID" value="ENSG00000169231.13"/>
</dbReference>
<dbReference type="Ensembl" id="ENST00000457183.6">
    <molecule id="P49746-2"/>
    <property type="protein sequence ID" value="ENSP00000392207.2"/>
    <property type="gene ID" value="ENSG00000169231.13"/>
</dbReference>
<dbReference type="GeneID" id="7059"/>
<dbReference type="KEGG" id="hsa:7059"/>
<dbReference type="MANE-Select" id="ENST00000368378.7">
    <property type="protein sequence ID" value="ENSP00000357362.3"/>
    <property type="RefSeq nucleotide sequence ID" value="NM_007112.5"/>
    <property type="RefSeq protein sequence ID" value="NP_009043.1"/>
</dbReference>
<dbReference type="UCSC" id="uc001fix.4">
    <molecule id="P49746-1"/>
    <property type="organism name" value="human"/>
</dbReference>
<dbReference type="AGR" id="HGNC:11787"/>
<dbReference type="CTD" id="7059"/>
<dbReference type="DisGeNET" id="7059"/>
<dbReference type="GeneCards" id="THBS3"/>
<dbReference type="HGNC" id="HGNC:11787">
    <property type="gene designation" value="THBS3"/>
</dbReference>
<dbReference type="HPA" id="ENSG00000169231">
    <property type="expression patterns" value="Low tissue specificity"/>
</dbReference>
<dbReference type="MalaCards" id="THBS3"/>
<dbReference type="MIM" id="188062">
    <property type="type" value="gene"/>
</dbReference>
<dbReference type="neXtProt" id="NX_P49746"/>
<dbReference type="OpenTargets" id="ENSG00000169231"/>
<dbReference type="PharmGKB" id="PA36499"/>
<dbReference type="VEuPathDB" id="HostDB:ENSG00000169231"/>
<dbReference type="eggNOG" id="ENOG502QRK8">
    <property type="taxonomic scope" value="Eukaryota"/>
</dbReference>
<dbReference type="GeneTree" id="ENSGT00940000159283"/>
<dbReference type="HOGENOM" id="CLU_009257_1_1_1"/>
<dbReference type="InParanoid" id="P49746"/>
<dbReference type="OMA" id="NCPLARN"/>
<dbReference type="OrthoDB" id="14563at2759"/>
<dbReference type="PAN-GO" id="P49746">
    <property type="GO annotations" value="1 GO annotation based on evolutionary models"/>
</dbReference>
<dbReference type="PhylomeDB" id="P49746"/>
<dbReference type="TreeFam" id="TF324917"/>
<dbReference type="PathwayCommons" id="P49746"/>
<dbReference type="Reactome" id="R-HSA-186797">
    <property type="pathway name" value="Signaling by PDGF"/>
</dbReference>
<dbReference type="SignaLink" id="P49746"/>
<dbReference type="BioGRID-ORCS" id="7059">
    <property type="hits" value="24 hits in 1158 CRISPR screens"/>
</dbReference>
<dbReference type="ChiTaRS" id="THBS3">
    <property type="organism name" value="human"/>
</dbReference>
<dbReference type="GeneWiki" id="THBS3"/>
<dbReference type="GenomeRNAi" id="7059"/>
<dbReference type="Pharos" id="P49746">
    <property type="development level" value="Tbio"/>
</dbReference>
<dbReference type="PRO" id="PR:P49746"/>
<dbReference type="Proteomes" id="UP000005640">
    <property type="component" value="Chromosome 1"/>
</dbReference>
<dbReference type="RNAct" id="P49746">
    <property type="molecule type" value="protein"/>
</dbReference>
<dbReference type="Bgee" id="ENSG00000169231">
    <property type="expression patterns" value="Expressed in right uterine tube and 152 other cell types or tissues"/>
</dbReference>
<dbReference type="ExpressionAtlas" id="P49746">
    <property type="expression patterns" value="baseline and differential"/>
</dbReference>
<dbReference type="GO" id="GO:0062023">
    <property type="term" value="C:collagen-containing extracellular matrix"/>
    <property type="evidence" value="ECO:0007005"/>
    <property type="project" value="BHF-UCL"/>
</dbReference>
<dbReference type="GO" id="GO:0005576">
    <property type="term" value="C:extracellular region"/>
    <property type="evidence" value="ECO:0000304"/>
    <property type="project" value="Reactome"/>
</dbReference>
<dbReference type="GO" id="GO:0048471">
    <property type="term" value="C:perinuclear region of cytoplasm"/>
    <property type="evidence" value="ECO:0000314"/>
    <property type="project" value="UniProtKB"/>
</dbReference>
<dbReference type="GO" id="GO:0005509">
    <property type="term" value="F:calcium ion binding"/>
    <property type="evidence" value="ECO:0000303"/>
    <property type="project" value="UniProtKB"/>
</dbReference>
<dbReference type="GO" id="GO:0008201">
    <property type="term" value="F:heparin binding"/>
    <property type="evidence" value="ECO:0000314"/>
    <property type="project" value="MGI"/>
</dbReference>
<dbReference type="GO" id="GO:0060346">
    <property type="term" value="P:bone trabecula formation"/>
    <property type="evidence" value="ECO:0007669"/>
    <property type="project" value="Ensembl"/>
</dbReference>
<dbReference type="GO" id="GO:0007160">
    <property type="term" value="P:cell-matrix adhesion"/>
    <property type="evidence" value="ECO:0000303"/>
    <property type="project" value="UniProtKB"/>
</dbReference>
<dbReference type="GO" id="GO:0003417">
    <property type="term" value="P:growth plate cartilage development"/>
    <property type="evidence" value="ECO:0007669"/>
    <property type="project" value="Ensembl"/>
</dbReference>
<dbReference type="GO" id="GO:0043931">
    <property type="term" value="P:ossification involved in bone maturation"/>
    <property type="evidence" value="ECO:0007669"/>
    <property type="project" value="Ensembl"/>
</dbReference>
<dbReference type="CDD" id="cd00054">
    <property type="entry name" value="EGF_CA"/>
    <property type="match status" value="2"/>
</dbReference>
<dbReference type="CDD" id="cd16079">
    <property type="entry name" value="TSP-3cc"/>
    <property type="match status" value="1"/>
</dbReference>
<dbReference type="FunFam" id="4.10.1080.10:FF:000004">
    <property type="entry name" value="Cartilage oligomeric matrix protein"/>
    <property type="match status" value="1"/>
</dbReference>
<dbReference type="FunFam" id="2.10.25.10:FF:000025">
    <property type="entry name" value="Thrombospondin 3"/>
    <property type="match status" value="1"/>
</dbReference>
<dbReference type="FunFam" id="2.10.25.10:FF:000027">
    <property type="entry name" value="Thrombospondin 3"/>
    <property type="match status" value="1"/>
</dbReference>
<dbReference type="FunFam" id="2.60.120.200:FF:000002">
    <property type="entry name" value="Thrombospondin 3"/>
    <property type="match status" value="1"/>
</dbReference>
<dbReference type="FunFam" id="4.10.1080.10:FF:000001">
    <property type="entry name" value="Thrombospondin 3"/>
    <property type="match status" value="1"/>
</dbReference>
<dbReference type="FunFam" id="2.10.25.10:FF:000170">
    <property type="entry name" value="thrombospondin-3 isoform X1"/>
    <property type="match status" value="1"/>
</dbReference>
<dbReference type="FunFam" id="2.10.25.10:FF:000232">
    <property type="entry name" value="thrombospondin-3 isoform X1"/>
    <property type="match status" value="1"/>
</dbReference>
<dbReference type="FunFam" id="2.60.120.200:FF:000038">
    <property type="entry name" value="thrombospondin-3 isoform X1"/>
    <property type="match status" value="1"/>
</dbReference>
<dbReference type="FunFam" id="1.20.5.10:FF:000001">
    <property type="entry name" value="thrombospondin-3 isoform X2"/>
    <property type="match status" value="1"/>
</dbReference>
<dbReference type="Gene3D" id="1.20.5.10">
    <property type="match status" value="1"/>
</dbReference>
<dbReference type="Gene3D" id="2.60.120.200">
    <property type="match status" value="2"/>
</dbReference>
<dbReference type="Gene3D" id="2.10.25.10">
    <property type="entry name" value="Laminin"/>
    <property type="match status" value="4"/>
</dbReference>
<dbReference type="Gene3D" id="4.10.1080.10">
    <property type="entry name" value="TSP type-3 repeat"/>
    <property type="match status" value="2"/>
</dbReference>
<dbReference type="InterPro" id="IPR013320">
    <property type="entry name" value="ConA-like_dom_sf"/>
</dbReference>
<dbReference type="InterPro" id="IPR001881">
    <property type="entry name" value="EGF-like_Ca-bd_dom"/>
</dbReference>
<dbReference type="InterPro" id="IPR000742">
    <property type="entry name" value="EGF-like_dom"/>
</dbReference>
<dbReference type="InterPro" id="IPR018097">
    <property type="entry name" value="EGF_Ca-bd_CS"/>
</dbReference>
<dbReference type="InterPro" id="IPR049883">
    <property type="entry name" value="NOTCH1_EGF-like"/>
</dbReference>
<dbReference type="InterPro" id="IPR003367">
    <property type="entry name" value="Thrombospondin_3-like_rpt"/>
</dbReference>
<dbReference type="InterPro" id="IPR017897">
    <property type="entry name" value="Thrombospondin_3_rpt"/>
</dbReference>
<dbReference type="InterPro" id="IPR008859">
    <property type="entry name" value="Thrombospondin_C"/>
</dbReference>
<dbReference type="InterPro" id="IPR024665">
    <property type="entry name" value="TSP/COMP_coiled-coil"/>
</dbReference>
<dbReference type="InterPro" id="IPR046970">
    <property type="entry name" value="TSP/COMP_coiled-coil_sf"/>
</dbReference>
<dbReference type="InterPro" id="IPR028507">
    <property type="entry name" value="TSP3_coiled-coil"/>
</dbReference>
<dbReference type="InterPro" id="IPR028974">
    <property type="entry name" value="TSP_type-3_rpt"/>
</dbReference>
<dbReference type="InterPro" id="IPR048287">
    <property type="entry name" value="TSPN-like_N"/>
</dbReference>
<dbReference type="PANTHER" id="PTHR10199">
    <property type="entry name" value="THROMBOSPONDIN"/>
    <property type="match status" value="1"/>
</dbReference>
<dbReference type="PANTHER" id="PTHR10199:SF89">
    <property type="entry name" value="THROMBOSPONDIN-3"/>
    <property type="match status" value="1"/>
</dbReference>
<dbReference type="Pfam" id="PF11598">
    <property type="entry name" value="COMP"/>
    <property type="match status" value="1"/>
</dbReference>
<dbReference type="Pfam" id="PF07645">
    <property type="entry name" value="EGF_CA"/>
    <property type="match status" value="2"/>
</dbReference>
<dbReference type="Pfam" id="PF02412">
    <property type="entry name" value="TSP_3"/>
    <property type="match status" value="5"/>
</dbReference>
<dbReference type="Pfam" id="PF05735">
    <property type="entry name" value="TSP_C"/>
    <property type="match status" value="1"/>
</dbReference>
<dbReference type="SMART" id="SM00181">
    <property type="entry name" value="EGF"/>
    <property type="match status" value="4"/>
</dbReference>
<dbReference type="SMART" id="SM00179">
    <property type="entry name" value="EGF_CA"/>
    <property type="match status" value="2"/>
</dbReference>
<dbReference type="SMART" id="SM00210">
    <property type="entry name" value="TSPN"/>
    <property type="match status" value="1"/>
</dbReference>
<dbReference type="SUPFAM" id="SSF58006">
    <property type="entry name" value="Assembly domain of cartilage oligomeric matrix protein"/>
    <property type="match status" value="1"/>
</dbReference>
<dbReference type="SUPFAM" id="SSF49899">
    <property type="entry name" value="Concanavalin A-like lectins/glucanases"/>
    <property type="match status" value="2"/>
</dbReference>
<dbReference type="SUPFAM" id="SSF57196">
    <property type="entry name" value="EGF/Laminin"/>
    <property type="match status" value="1"/>
</dbReference>
<dbReference type="SUPFAM" id="SSF103647">
    <property type="entry name" value="TSP type-3 repeat"/>
    <property type="match status" value="3"/>
</dbReference>
<dbReference type="PROSITE" id="PS01186">
    <property type="entry name" value="EGF_2"/>
    <property type="match status" value="1"/>
</dbReference>
<dbReference type="PROSITE" id="PS50026">
    <property type="entry name" value="EGF_3"/>
    <property type="match status" value="3"/>
</dbReference>
<dbReference type="PROSITE" id="PS01187">
    <property type="entry name" value="EGF_CA"/>
    <property type="match status" value="2"/>
</dbReference>
<dbReference type="PROSITE" id="PS51234">
    <property type="entry name" value="TSP3"/>
    <property type="match status" value="8"/>
</dbReference>
<dbReference type="PROSITE" id="PS51236">
    <property type="entry name" value="TSP_CTER"/>
    <property type="match status" value="1"/>
</dbReference>
<sequence>METQELRGALALLLLCFFTSASQDLQVIDLLTVGESRQMVAVAEKIRTALLTAGDIYLLSTFRLPPKQGGVLFGLYSRQDNTRWLEASVVGKINKVLVRYQREDGKVHAVNLQQAGLADGRTHTVLLRLRGPSRPSPALHLYVDCKLGDQHAGLPALAPIPPAEVDGLEIRTGQKAYLRMQGFVESMKIILGGSMARVGALSECPFQGDESIHSAVTNALHSILGEQTKALVTQLTLFNQILVELRDDIRDQVKEMSLIRNTIMECQVCGFHEQRSHCSPNPCFRGVDCMEVYEYPGYRCGPCPPGLQGNGTHCSDINECAHADPCFPGSSCINTMPGFHCEACPRGYKGTQVSGVGIDYARASKQVCNDIDECNDGNNGGCDPNSICTNTVGSFKCGPCRLGFLGNQSQGCLPARTCHSPAHSPCHIHAHCLFERNGAVSCQCNVGWAGNGNVCGTDTDIDGYPDQALPCMDNNKHCKQDNCLLTPNSGQEDADNDGVGDQCDDDADGDGIKNVEDNCRLFPNKDQQNSDTDSFGDACDNCPNVPNNDQKDTDGNGEGDACDNDVDGDGIPNGLDNCPKVPNPLQTDRDEDGVGDACDSCPEMSNPTQTDADSDLVGDVCDTNEDSDGDGHQDTKDNCPQLPNSSQLDSDNDGLGDECDGDDDNDGIPDYVPPGPDNCRLVPNPNQKDSDGNGVGDVCEDDFDNDAVVDPLDVCPESAEVTLTDFRAYQTVVLDPEGDAQIDPNWVVLNQGMEIVQTMNSDPGLAVGYTAFNGVDFEGTFHVNTVTDDDYAGFLFSYQDSGRFYVVMWKQTEQTYWQATPFRAVAQPGLQLKAVTSVSGPGEHLRNALWHTGHTPDQVRLLWTDPRNVGWRDKTSYRWQLLHRPQVGYIRVKLYEGPQLVADSGVIIDTSMRGGRLGVFCFSQENIIWSNLQYRCNDTVPEDFEPFRRQLLQGRV</sequence>
<keyword id="KW-0025">Alternative splicing</keyword>
<keyword id="KW-0106">Calcium</keyword>
<keyword id="KW-0130">Cell adhesion</keyword>
<keyword id="KW-1015">Disulfide bond</keyword>
<keyword id="KW-0245">EGF-like domain</keyword>
<keyword id="KW-0325">Glycoprotein</keyword>
<keyword id="KW-1267">Proteomics identification</keyword>
<keyword id="KW-1185">Reference proteome</keyword>
<keyword id="KW-0677">Repeat</keyword>
<keyword id="KW-0732">Signal</keyword>
<organism>
    <name type="scientific">Homo sapiens</name>
    <name type="common">Human</name>
    <dbReference type="NCBI Taxonomy" id="9606"/>
    <lineage>
        <taxon>Eukaryota</taxon>
        <taxon>Metazoa</taxon>
        <taxon>Chordata</taxon>
        <taxon>Craniata</taxon>
        <taxon>Vertebrata</taxon>
        <taxon>Euteleostomi</taxon>
        <taxon>Mammalia</taxon>
        <taxon>Eutheria</taxon>
        <taxon>Euarchontoglires</taxon>
        <taxon>Primates</taxon>
        <taxon>Haplorrhini</taxon>
        <taxon>Catarrhini</taxon>
        <taxon>Hominidae</taxon>
        <taxon>Homo</taxon>
    </lineage>
</organism>
<name>TSP3_HUMAN</name>
<feature type="signal peptide" evidence="1">
    <location>
        <begin position="1"/>
        <end position="22"/>
    </location>
</feature>
<feature type="chain" id="PRO_0000035849" description="Thrombospondin-3">
    <location>
        <begin position="23"/>
        <end position="956"/>
    </location>
</feature>
<feature type="domain" description="Laminin G-like">
    <location>
        <begin position="23"/>
        <end position="193"/>
    </location>
</feature>
<feature type="domain" description="EGF-like 1; calcium-binding" evidence="2">
    <location>
        <begin position="316"/>
        <end position="354"/>
    </location>
</feature>
<feature type="domain" description="EGF-like 2; calcium-binding" evidence="2">
    <location>
        <begin position="370"/>
        <end position="410"/>
    </location>
</feature>
<feature type="domain" description="EGF-like 3" evidence="2">
    <location>
        <begin position="414"/>
        <end position="456"/>
    </location>
</feature>
<feature type="repeat" description="TSP type-3 1">
    <location>
        <begin position="457"/>
        <end position="491"/>
    </location>
</feature>
<feature type="repeat" description="TSP type-3 2">
    <location>
        <begin position="492"/>
        <end position="527"/>
    </location>
</feature>
<feature type="repeat" description="TSP type-3 3">
    <location>
        <begin position="528"/>
        <end position="550"/>
    </location>
</feature>
<feature type="repeat" description="TSP type-3 4">
    <location>
        <begin position="551"/>
        <end position="586"/>
    </location>
</feature>
<feature type="repeat" description="TSP type-3 5">
    <location>
        <begin position="587"/>
        <end position="609"/>
    </location>
</feature>
<feature type="repeat" description="TSP type-3 6">
    <location>
        <begin position="610"/>
        <end position="647"/>
    </location>
</feature>
<feature type="repeat" description="TSP type-3 7">
    <location>
        <begin position="648"/>
        <end position="687"/>
    </location>
</feature>
<feature type="repeat" description="TSP type-3 8">
    <location>
        <begin position="688"/>
        <end position="723"/>
    </location>
</feature>
<feature type="domain" description="TSP C-terminal" evidence="3">
    <location>
        <begin position="727"/>
        <end position="941"/>
    </location>
</feature>
<feature type="region of interest" description="Disordered" evidence="4">
    <location>
        <begin position="518"/>
        <end position="537"/>
    </location>
</feature>
<feature type="region of interest" description="Disordered" evidence="4">
    <location>
        <begin position="546"/>
        <end position="702"/>
    </location>
</feature>
<feature type="compositionally biased region" description="Acidic residues" evidence="4">
    <location>
        <begin position="555"/>
        <end position="568"/>
    </location>
</feature>
<feature type="compositionally biased region" description="Acidic residues" evidence="4">
    <location>
        <begin position="612"/>
        <end position="628"/>
    </location>
</feature>
<feature type="compositionally biased region" description="Acidic residues" evidence="4">
    <location>
        <begin position="650"/>
        <end position="667"/>
    </location>
</feature>
<feature type="glycosylation site" description="N-linked (GlcNAc...) asparagine" evidence="1">
    <location>
        <position position="310"/>
    </location>
</feature>
<feature type="glycosylation site" description="N-linked (GlcNAc...) asparagine" evidence="1">
    <location>
        <position position="407"/>
    </location>
</feature>
<feature type="glycosylation site" description="N-linked (GlcNAc...) asparagine" evidence="1">
    <location>
        <position position="644"/>
    </location>
</feature>
<feature type="glycosylation site" description="N-linked (GlcNAc...) asparagine" evidence="1">
    <location>
        <position position="937"/>
    </location>
</feature>
<feature type="disulfide bond" description="Interchain" evidence="7">
    <location>
        <position position="266"/>
    </location>
</feature>
<feature type="disulfide bond" description="Interchain" evidence="7">
    <location>
        <position position="269"/>
    </location>
</feature>
<feature type="disulfide bond" evidence="2">
    <location>
        <begin position="278"/>
        <end position="289"/>
    </location>
</feature>
<feature type="disulfide bond" evidence="2">
    <location>
        <begin position="283"/>
        <end position="300"/>
    </location>
</feature>
<feature type="disulfide bond" evidence="2">
    <location>
        <begin position="303"/>
        <end position="314"/>
    </location>
</feature>
<feature type="disulfide bond" evidence="2">
    <location>
        <begin position="320"/>
        <end position="332"/>
    </location>
</feature>
<feature type="disulfide bond" evidence="2">
    <location>
        <begin position="326"/>
        <end position="341"/>
    </location>
</feature>
<feature type="disulfide bond" evidence="2">
    <location>
        <begin position="344"/>
        <end position="368"/>
    </location>
</feature>
<feature type="disulfide bond" evidence="2">
    <location>
        <begin position="374"/>
        <end position="388"/>
    </location>
</feature>
<feature type="disulfide bond" evidence="2">
    <location>
        <begin position="382"/>
        <end position="397"/>
    </location>
</feature>
<feature type="disulfide bond" evidence="2">
    <location>
        <begin position="400"/>
        <end position="412"/>
    </location>
</feature>
<feature type="disulfide bond" evidence="2">
    <location>
        <begin position="418"/>
        <end position="432"/>
    </location>
</feature>
<feature type="disulfide bond" evidence="2">
    <location>
        <begin position="426"/>
        <end position="442"/>
    </location>
</feature>
<feature type="disulfide bond" evidence="2">
    <location>
        <begin position="444"/>
        <end position="455"/>
    </location>
</feature>
<feature type="disulfide bond" evidence="2">
    <location>
        <begin position="471"/>
        <end position="478"/>
    </location>
</feature>
<feature type="disulfide bond" evidence="2">
    <location>
        <begin position="483"/>
        <end position="503"/>
    </location>
</feature>
<feature type="disulfide bond" evidence="2">
    <location>
        <begin position="519"/>
        <end position="539"/>
    </location>
</feature>
<feature type="disulfide bond" evidence="2">
    <location>
        <begin position="542"/>
        <end position="562"/>
    </location>
</feature>
<feature type="disulfide bond" evidence="2">
    <location>
        <begin position="578"/>
        <end position="598"/>
    </location>
</feature>
<feature type="disulfide bond" evidence="2">
    <location>
        <begin position="601"/>
        <end position="621"/>
    </location>
</feature>
<feature type="disulfide bond" evidence="2">
    <location>
        <begin position="639"/>
        <end position="659"/>
    </location>
</feature>
<feature type="disulfide bond" evidence="2">
    <location>
        <begin position="679"/>
        <end position="699"/>
    </location>
</feature>
<feature type="disulfide bond" evidence="2">
    <location>
        <begin position="715"/>
        <end position="936"/>
    </location>
</feature>
<feature type="splice variant" id="VSP_045328" description="In isoform 2." evidence="6">
    <location>
        <begin position="96"/>
        <end position="215"/>
    </location>
</feature>
<feature type="sequence variant" id="VAR_052658" description="In dbSNP:rs35154152.">
    <original>S</original>
    <variation>G</variation>
    <location>
        <position position="279"/>
    </location>
</feature>
<feature type="sequence variant" id="VAR_035808" description="In a breast cancer sample; somatic mutation." evidence="5">
    <original>R</original>
    <variation>G</variation>
    <location>
        <position position="955"/>
    </location>
</feature>
<reference key="1">
    <citation type="journal article" date="1995" name="Genomics">
        <title>Structure and organization of the human thrombospondin 3 gene (THBS3).</title>
        <authorList>
            <person name="Adolph K.W."/>
            <person name="Long G.L."/>
            <person name="Winfield S."/>
            <person name="Ginns E.I."/>
            <person name="Bornstein P."/>
        </authorList>
    </citation>
    <scope>NUCLEOTIDE SEQUENCE [MRNA] (ISOFORM 1)</scope>
    <source>
        <tissue>Lung</tissue>
    </source>
</reference>
<reference key="2">
    <citation type="journal article" date="2004" name="Nat. Genet.">
        <title>Complete sequencing and characterization of 21,243 full-length human cDNAs.</title>
        <authorList>
            <person name="Ota T."/>
            <person name="Suzuki Y."/>
            <person name="Nishikawa T."/>
            <person name="Otsuki T."/>
            <person name="Sugiyama T."/>
            <person name="Irie R."/>
            <person name="Wakamatsu A."/>
            <person name="Hayashi K."/>
            <person name="Sato H."/>
            <person name="Nagai K."/>
            <person name="Kimura K."/>
            <person name="Makita H."/>
            <person name="Sekine M."/>
            <person name="Obayashi M."/>
            <person name="Nishi T."/>
            <person name="Shibahara T."/>
            <person name="Tanaka T."/>
            <person name="Ishii S."/>
            <person name="Yamamoto J."/>
            <person name="Saito K."/>
            <person name="Kawai Y."/>
            <person name="Isono Y."/>
            <person name="Nakamura Y."/>
            <person name="Nagahari K."/>
            <person name="Murakami K."/>
            <person name="Yasuda T."/>
            <person name="Iwayanagi T."/>
            <person name="Wagatsuma M."/>
            <person name="Shiratori A."/>
            <person name="Sudo H."/>
            <person name="Hosoiri T."/>
            <person name="Kaku Y."/>
            <person name="Kodaira H."/>
            <person name="Kondo H."/>
            <person name="Sugawara M."/>
            <person name="Takahashi M."/>
            <person name="Kanda K."/>
            <person name="Yokoi T."/>
            <person name="Furuya T."/>
            <person name="Kikkawa E."/>
            <person name="Omura Y."/>
            <person name="Abe K."/>
            <person name="Kamihara K."/>
            <person name="Katsuta N."/>
            <person name="Sato K."/>
            <person name="Tanikawa M."/>
            <person name="Yamazaki M."/>
            <person name="Ninomiya K."/>
            <person name="Ishibashi T."/>
            <person name="Yamashita H."/>
            <person name="Murakawa K."/>
            <person name="Fujimori K."/>
            <person name="Tanai H."/>
            <person name="Kimata M."/>
            <person name="Watanabe M."/>
            <person name="Hiraoka S."/>
            <person name="Chiba Y."/>
            <person name="Ishida S."/>
            <person name="Ono Y."/>
            <person name="Takiguchi S."/>
            <person name="Watanabe S."/>
            <person name="Yosida M."/>
            <person name="Hotuta T."/>
            <person name="Kusano J."/>
            <person name="Kanehori K."/>
            <person name="Takahashi-Fujii A."/>
            <person name="Hara H."/>
            <person name="Tanase T.-O."/>
            <person name="Nomura Y."/>
            <person name="Togiya S."/>
            <person name="Komai F."/>
            <person name="Hara R."/>
            <person name="Takeuchi K."/>
            <person name="Arita M."/>
            <person name="Imose N."/>
            <person name="Musashino K."/>
            <person name="Yuuki H."/>
            <person name="Oshima A."/>
            <person name="Sasaki N."/>
            <person name="Aotsuka S."/>
            <person name="Yoshikawa Y."/>
            <person name="Matsunawa H."/>
            <person name="Ichihara T."/>
            <person name="Shiohata N."/>
            <person name="Sano S."/>
            <person name="Moriya S."/>
            <person name="Momiyama H."/>
            <person name="Satoh N."/>
            <person name="Takami S."/>
            <person name="Terashima Y."/>
            <person name="Suzuki O."/>
            <person name="Nakagawa S."/>
            <person name="Senoh A."/>
            <person name="Mizoguchi H."/>
            <person name="Goto Y."/>
            <person name="Shimizu F."/>
            <person name="Wakebe H."/>
            <person name="Hishigaki H."/>
            <person name="Watanabe T."/>
            <person name="Sugiyama A."/>
            <person name="Takemoto M."/>
            <person name="Kawakami B."/>
            <person name="Yamazaki M."/>
            <person name="Watanabe K."/>
            <person name="Kumagai A."/>
            <person name="Itakura S."/>
            <person name="Fukuzumi Y."/>
            <person name="Fujimori Y."/>
            <person name="Komiyama M."/>
            <person name="Tashiro H."/>
            <person name="Tanigami A."/>
            <person name="Fujiwara T."/>
            <person name="Ono T."/>
            <person name="Yamada K."/>
            <person name="Fujii Y."/>
            <person name="Ozaki K."/>
            <person name="Hirao M."/>
            <person name="Ohmori Y."/>
            <person name="Kawabata A."/>
            <person name="Hikiji T."/>
            <person name="Kobatake N."/>
            <person name="Inagaki H."/>
            <person name="Ikema Y."/>
            <person name="Okamoto S."/>
            <person name="Okitani R."/>
            <person name="Kawakami T."/>
            <person name="Noguchi S."/>
            <person name="Itoh T."/>
            <person name="Shigeta K."/>
            <person name="Senba T."/>
            <person name="Matsumura K."/>
            <person name="Nakajima Y."/>
            <person name="Mizuno T."/>
            <person name="Morinaga M."/>
            <person name="Sasaki M."/>
            <person name="Togashi T."/>
            <person name="Oyama M."/>
            <person name="Hata H."/>
            <person name="Watanabe M."/>
            <person name="Komatsu T."/>
            <person name="Mizushima-Sugano J."/>
            <person name="Satoh T."/>
            <person name="Shirai Y."/>
            <person name="Takahashi Y."/>
            <person name="Nakagawa K."/>
            <person name="Okumura K."/>
            <person name="Nagase T."/>
            <person name="Nomura N."/>
            <person name="Kikuchi H."/>
            <person name="Masuho Y."/>
            <person name="Yamashita R."/>
            <person name="Nakai K."/>
            <person name="Yada T."/>
            <person name="Nakamura Y."/>
            <person name="Ohara O."/>
            <person name="Isogai T."/>
            <person name="Sugano S."/>
        </authorList>
    </citation>
    <scope>NUCLEOTIDE SEQUENCE [LARGE SCALE MRNA] (ISOFORM 2)</scope>
</reference>
<reference key="3">
    <citation type="journal article" date="2006" name="Nature">
        <title>The DNA sequence and biological annotation of human chromosome 1.</title>
        <authorList>
            <person name="Gregory S.G."/>
            <person name="Barlow K.F."/>
            <person name="McLay K.E."/>
            <person name="Kaul R."/>
            <person name="Swarbreck D."/>
            <person name="Dunham A."/>
            <person name="Scott C.E."/>
            <person name="Howe K.L."/>
            <person name="Woodfine K."/>
            <person name="Spencer C.C.A."/>
            <person name="Jones M.C."/>
            <person name="Gillson C."/>
            <person name="Searle S."/>
            <person name="Zhou Y."/>
            <person name="Kokocinski F."/>
            <person name="McDonald L."/>
            <person name="Evans R."/>
            <person name="Phillips K."/>
            <person name="Atkinson A."/>
            <person name="Cooper R."/>
            <person name="Jones C."/>
            <person name="Hall R.E."/>
            <person name="Andrews T.D."/>
            <person name="Lloyd C."/>
            <person name="Ainscough R."/>
            <person name="Almeida J.P."/>
            <person name="Ambrose K.D."/>
            <person name="Anderson F."/>
            <person name="Andrew R.W."/>
            <person name="Ashwell R.I.S."/>
            <person name="Aubin K."/>
            <person name="Babbage A.K."/>
            <person name="Bagguley C.L."/>
            <person name="Bailey J."/>
            <person name="Beasley H."/>
            <person name="Bethel G."/>
            <person name="Bird C.P."/>
            <person name="Bray-Allen S."/>
            <person name="Brown J.Y."/>
            <person name="Brown A.J."/>
            <person name="Buckley D."/>
            <person name="Burton J."/>
            <person name="Bye J."/>
            <person name="Carder C."/>
            <person name="Chapman J.C."/>
            <person name="Clark S.Y."/>
            <person name="Clarke G."/>
            <person name="Clee C."/>
            <person name="Cobley V."/>
            <person name="Collier R.E."/>
            <person name="Corby N."/>
            <person name="Coville G.J."/>
            <person name="Davies J."/>
            <person name="Deadman R."/>
            <person name="Dunn M."/>
            <person name="Earthrowl M."/>
            <person name="Ellington A.G."/>
            <person name="Errington H."/>
            <person name="Frankish A."/>
            <person name="Frankland J."/>
            <person name="French L."/>
            <person name="Garner P."/>
            <person name="Garnett J."/>
            <person name="Gay L."/>
            <person name="Ghori M.R.J."/>
            <person name="Gibson R."/>
            <person name="Gilby L.M."/>
            <person name="Gillett W."/>
            <person name="Glithero R.J."/>
            <person name="Grafham D.V."/>
            <person name="Griffiths C."/>
            <person name="Griffiths-Jones S."/>
            <person name="Grocock R."/>
            <person name="Hammond S."/>
            <person name="Harrison E.S.I."/>
            <person name="Hart E."/>
            <person name="Haugen E."/>
            <person name="Heath P.D."/>
            <person name="Holmes S."/>
            <person name="Holt K."/>
            <person name="Howden P.J."/>
            <person name="Hunt A.R."/>
            <person name="Hunt S.E."/>
            <person name="Hunter G."/>
            <person name="Isherwood J."/>
            <person name="James R."/>
            <person name="Johnson C."/>
            <person name="Johnson D."/>
            <person name="Joy A."/>
            <person name="Kay M."/>
            <person name="Kershaw J.K."/>
            <person name="Kibukawa M."/>
            <person name="Kimberley A.M."/>
            <person name="King A."/>
            <person name="Knights A.J."/>
            <person name="Lad H."/>
            <person name="Laird G."/>
            <person name="Lawlor S."/>
            <person name="Leongamornlert D.A."/>
            <person name="Lloyd D.M."/>
            <person name="Loveland J."/>
            <person name="Lovell J."/>
            <person name="Lush M.J."/>
            <person name="Lyne R."/>
            <person name="Martin S."/>
            <person name="Mashreghi-Mohammadi M."/>
            <person name="Matthews L."/>
            <person name="Matthews N.S.W."/>
            <person name="McLaren S."/>
            <person name="Milne S."/>
            <person name="Mistry S."/>
            <person name="Moore M.J.F."/>
            <person name="Nickerson T."/>
            <person name="O'Dell C.N."/>
            <person name="Oliver K."/>
            <person name="Palmeiri A."/>
            <person name="Palmer S.A."/>
            <person name="Parker A."/>
            <person name="Patel D."/>
            <person name="Pearce A.V."/>
            <person name="Peck A.I."/>
            <person name="Pelan S."/>
            <person name="Phelps K."/>
            <person name="Phillimore B.J."/>
            <person name="Plumb R."/>
            <person name="Rajan J."/>
            <person name="Raymond C."/>
            <person name="Rouse G."/>
            <person name="Saenphimmachak C."/>
            <person name="Sehra H.K."/>
            <person name="Sheridan E."/>
            <person name="Shownkeen R."/>
            <person name="Sims S."/>
            <person name="Skuce C.D."/>
            <person name="Smith M."/>
            <person name="Steward C."/>
            <person name="Subramanian S."/>
            <person name="Sycamore N."/>
            <person name="Tracey A."/>
            <person name="Tromans A."/>
            <person name="Van Helmond Z."/>
            <person name="Wall M."/>
            <person name="Wallis J.M."/>
            <person name="White S."/>
            <person name="Whitehead S.L."/>
            <person name="Wilkinson J.E."/>
            <person name="Willey D.L."/>
            <person name="Williams H."/>
            <person name="Wilming L."/>
            <person name="Wray P.W."/>
            <person name="Wu Z."/>
            <person name="Coulson A."/>
            <person name="Vaudin M."/>
            <person name="Sulston J.E."/>
            <person name="Durbin R.M."/>
            <person name="Hubbard T."/>
            <person name="Wooster R."/>
            <person name="Dunham I."/>
            <person name="Carter N.P."/>
            <person name="McVean G."/>
            <person name="Ross M.T."/>
            <person name="Harrow J."/>
            <person name="Olson M.V."/>
            <person name="Beck S."/>
            <person name="Rogers J."/>
            <person name="Bentley D.R."/>
        </authorList>
    </citation>
    <scope>NUCLEOTIDE SEQUENCE [LARGE SCALE GENOMIC DNA]</scope>
</reference>
<reference key="4">
    <citation type="submission" date="2005-09" db="EMBL/GenBank/DDBJ databases">
        <authorList>
            <person name="Mural R.J."/>
            <person name="Istrail S."/>
            <person name="Sutton G.G."/>
            <person name="Florea L."/>
            <person name="Halpern A.L."/>
            <person name="Mobarry C.M."/>
            <person name="Lippert R."/>
            <person name="Walenz B."/>
            <person name="Shatkay H."/>
            <person name="Dew I."/>
            <person name="Miller J.R."/>
            <person name="Flanigan M.J."/>
            <person name="Edwards N.J."/>
            <person name="Bolanos R."/>
            <person name="Fasulo D."/>
            <person name="Halldorsson B.V."/>
            <person name="Hannenhalli S."/>
            <person name="Turner R."/>
            <person name="Yooseph S."/>
            <person name="Lu F."/>
            <person name="Nusskern D.R."/>
            <person name="Shue B.C."/>
            <person name="Zheng X.H."/>
            <person name="Zhong F."/>
            <person name="Delcher A.L."/>
            <person name="Huson D.H."/>
            <person name="Kravitz S.A."/>
            <person name="Mouchard L."/>
            <person name="Reinert K."/>
            <person name="Remington K.A."/>
            <person name="Clark A.G."/>
            <person name="Waterman M.S."/>
            <person name="Eichler E.E."/>
            <person name="Adams M.D."/>
            <person name="Hunkapiller M.W."/>
            <person name="Myers E.W."/>
            <person name="Venter J.C."/>
        </authorList>
    </citation>
    <scope>NUCLEOTIDE SEQUENCE [LARGE SCALE GENOMIC DNA]</scope>
</reference>
<reference key="5">
    <citation type="journal article" date="1997" name="Genome Res.">
        <title>Identification of three additional genes contiguous to the glucocerebrosidase locus on chromosome 1q21: implications for Gaucher disease.</title>
        <authorList>
            <person name="Winfield S.L."/>
            <person name="Tayebi N."/>
            <person name="Martin B.M."/>
            <person name="Ginns E.I."/>
            <person name="Sidransky E."/>
        </authorList>
    </citation>
    <scope>NUCLEOTIDE SEQUENCE [GENOMIC DNA] OF 1-736</scope>
</reference>
<reference key="6">
    <citation type="journal article" date="2004" name="Genome Res.">
        <title>The status, quality, and expansion of the NIH full-length cDNA project: the Mammalian Gene Collection (MGC).</title>
        <authorList>
            <consortium name="The MGC Project Team"/>
        </authorList>
    </citation>
    <scope>NUCLEOTIDE SEQUENCE [LARGE SCALE MRNA] OF 365-956</scope>
    <source>
        <tissue>Retina</tissue>
    </source>
</reference>
<reference key="7">
    <citation type="journal article" date="2014" name="J. Proteomics">
        <title>An enzyme assisted RP-RPLC approach for in-depth analysis of human liver phosphoproteome.</title>
        <authorList>
            <person name="Bian Y."/>
            <person name="Song C."/>
            <person name="Cheng K."/>
            <person name="Dong M."/>
            <person name="Wang F."/>
            <person name="Huang J."/>
            <person name="Sun D."/>
            <person name="Wang L."/>
            <person name="Ye M."/>
            <person name="Zou H."/>
        </authorList>
    </citation>
    <scope>IDENTIFICATION BY MASS SPECTROMETRY [LARGE SCALE ANALYSIS]</scope>
    <source>
        <tissue>Liver</tissue>
    </source>
</reference>
<reference key="8">
    <citation type="journal article" date="2006" name="Science">
        <title>The consensus coding sequences of human breast and colorectal cancers.</title>
        <authorList>
            <person name="Sjoeblom T."/>
            <person name="Jones S."/>
            <person name="Wood L.D."/>
            <person name="Parsons D.W."/>
            <person name="Lin J."/>
            <person name="Barber T.D."/>
            <person name="Mandelker D."/>
            <person name="Leary R.J."/>
            <person name="Ptak J."/>
            <person name="Silliman N."/>
            <person name="Szabo S."/>
            <person name="Buckhaults P."/>
            <person name="Farrell C."/>
            <person name="Meeh P."/>
            <person name="Markowitz S.D."/>
            <person name="Willis J."/>
            <person name="Dawson D."/>
            <person name="Willson J.K.V."/>
            <person name="Gazdar A.F."/>
            <person name="Hartigan J."/>
            <person name="Wu L."/>
            <person name="Liu C."/>
            <person name="Parmigiani G."/>
            <person name="Park B.H."/>
            <person name="Bachman K.E."/>
            <person name="Papadopoulos N."/>
            <person name="Vogelstein B."/>
            <person name="Kinzler K.W."/>
            <person name="Velculescu V.E."/>
        </authorList>
    </citation>
    <scope>VARIANT [LARGE SCALE ANALYSIS] GLY-955</scope>
</reference>
<comment type="function">
    <text>Adhesive glycoprotein that mediates cell-to-cell and cell-to-matrix interactions. Can bind to fibrinogen, fibronectin, laminin and type V collagen.</text>
</comment>
<comment type="subunit">
    <text>Oligomer; disulfide-linked.</text>
</comment>
<comment type="interaction">
    <interactant intactId="EBI-2530931">
        <id>P49746</id>
    </interactant>
    <interactant intactId="EBI-1049597">
        <id>P27797</id>
        <label>CALR</label>
    </interactant>
    <organismsDiffer>false</organismsDiffer>
    <experiments>3</experiments>
</comment>
<comment type="interaction">
    <interactant intactId="EBI-2530931">
        <id>P49746</id>
    </interactant>
    <interactant intactId="EBI-351007">
        <id>P36957</id>
        <label>DLST</label>
    </interactant>
    <organismsDiffer>false</organismsDiffer>
    <experiments>3</experiments>
</comment>
<comment type="interaction">
    <interactant intactId="EBI-2530931">
        <id>P49746</id>
    </interactant>
    <interactant intactId="EBI-1055945">
        <id>Q8TDX7</id>
        <label>NEK7</label>
    </interactant>
    <organismsDiffer>false</organismsDiffer>
    <experiments>3</experiments>
</comment>
<comment type="alternative products">
    <event type="alternative splicing"/>
    <isoform>
        <id>P49746-1</id>
        <name>1</name>
        <sequence type="displayed"/>
    </isoform>
    <isoform>
        <id>P49746-2</id>
        <name>2</name>
        <sequence type="described" ref="VSP_045328"/>
    </isoform>
</comment>
<comment type="similarity">
    <text evidence="7">Belongs to the thrombospondin family.</text>
</comment>
<protein>
    <recommendedName>
        <fullName>Thrombospondin-3</fullName>
    </recommendedName>
</protein>
<gene>
    <name type="primary">THBS3</name>
    <name type="synonym">TSP3</name>
</gene>
<accession>P49746</accession>
<accession>B1AVR8</accession>
<accession>B4DQ20</accession>
<accession>Q8WV34</accession>